<keyword id="KW-0963">Cytoplasm</keyword>
<keyword id="KW-0489">Methyltransferase</keyword>
<keyword id="KW-1185">Reference proteome</keyword>
<keyword id="KW-0698">rRNA processing</keyword>
<keyword id="KW-0949">S-adenosyl-L-methionine</keyword>
<keyword id="KW-0808">Transferase</keyword>
<protein>
    <recommendedName>
        <fullName evidence="1">Ribosomal RNA large subunit methyltransferase H</fullName>
        <ecNumber evidence="1">2.1.1.177</ecNumber>
    </recommendedName>
    <alternativeName>
        <fullName evidence="1">23S rRNA (pseudouridine1915-N3)-methyltransferase</fullName>
    </alternativeName>
    <alternativeName>
        <fullName evidence="1">23S rRNA m3Psi1915 methyltransferase</fullName>
    </alternativeName>
    <alternativeName>
        <fullName evidence="1">rRNA (pseudouridine-N3-)-methyltransferase RlmH</fullName>
    </alternativeName>
</protein>
<feature type="chain" id="PRO_0000198157" description="Ribosomal RNA large subunit methyltransferase H">
    <location>
        <begin position="1"/>
        <end position="156"/>
    </location>
</feature>
<feature type="binding site" evidence="1">
    <location>
        <position position="73"/>
    </location>
    <ligand>
        <name>S-adenosyl-L-methionine</name>
        <dbReference type="ChEBI" id="CHEBI:59789"/>
    </ligand>
</feature>
<feature type="binding site" evidence="1">
    <location>
        <position position="104"/>
    </location>
    <ligand>
        <name>S-adenosyl-L-methionine</name>
        <dbReference type="ChEBI" id="CHEBI:59789"/>
    </ligand>
</feature>
<feature type="binding site" evidence="1">
    <location>
        <begin position="123"/>
        <end position="128"/>
    </location>
    <ligand>
        <name>S-adenosyl-L-methionine</name>
        <dbReference type="ChEBI" id="CHEBI:59789"/>
    </ligand>
</feature>
<accession>Q6LN94</accession>
<reference key="1">
    <citation type="journal article" date="2005" name="Science">
        <title>Life at depth: Photobacterium profundum genome sequence and expression analysis.</title>
        <authorList>
            <person name="Vezzi A."/>
            <person name="Campanaro S."/>
            <person name="D'Angelo M."/>
            <person name="Simonato F."/>
            <person name="Vitulo N."/>
            <person name="Lauro F.M."/>
            <person name="Cestaro A."/>
            <person name="Malacrida G."/>
            <person name="Simionati B."/>
            <person name="Cannata N."/>
            <person name="Romualdi C."/>
            <person name="Bartlett D.H."/>
            <person name="Valle G."/>
        </authorList>
    </citation>
    <scope>NUCLEOTIDE SEQUENCE [LARGE SCALE GENOMIC DNA]</scope>
    <source>
        <strain>ATCC BAA-1253 / SS9</strain>
    </source>
</reference>
<gene>
    <name evidence="1" type="primary">rlmH</name>
    <name type="ordered locus">PBPRA2889</name>
</gene>
<sequence>MKLQLIAVGTKMPKWVEEGYKEYSRRFPKDMPLELIEIPAGKRGKNADIARILQKEGEAMLATVAKGNRIVTLDIPGKRWDTGQLAQQLDSWKLDGRDVSILIGGPEGLSPACKAAAEQSWSLSPLTLPHPLVRVVMAESLYRAWSVTANHPYHRE</sequence>
<name>RLMH_PHOPR</name>
<evidence type="ECO:0000255" key="1">
    <source>
        <dbReference type="HAMAP-Rule" id="MF_00658"/>
    </source>
</evidence>
<evidence type="ECO:0000305" key="2"/>
<organism>
    <name type="scientific">Photobacterium profundum (strain SS9)</name>
    <dbReference type="NCBI Taxonomy" id="298386"/>
    <lineage>
        <taxon>Bacteria</taxon>
        <taxon>Pseudomonadati</taxon>
        <taxon>Pseudomonadota</taxon>
        <taxon>Gammaproteobacteria</taxon>
        <taxon>Vibrionales</taxon>
        <taxon>Vibrionaceae</taxon>
        <taxon>Photobacterium</taxon>
    </lineage>
</organism>
<dbReference type="EC" id="2.1.1.177" evidence="1"/>
<dbReference type="EMBL" id="CR378672">
    <property type="protein sequence ID" value="CAG21232.1"/>
    <property type="status" value="ALT_INIT"/>
    <property type="molecule type" value="Genomic_DNA"/>
</dbReference>
<dbReference type="RefSeq" id="WP_006232736.1">
    <property type="nucleotide sequence ID" value="NC_006370.1"/>
</dbReference>
<dbReference type="SMR" id="Q6LN94"/>
<dbReference type="STRING" id="298386.PBPRA2889"/>
<dbReference type="KEGG" id="ppr:PBPRA2889"/>
<dbReference type="eggNOG" id="COG1576">
    <property type="taxonomic scope" value="Bacteria"/>
</dbReference>
<dbReference type="HOGENOM" id="CLU_100552_1_0_6"/>
<dbReference type="Proteomes" id="UP000000593">
    <property type="component" value="Chromosome 1"/>
</dbReference>
<dbReference type="GO" id="GO:0005737">
    <property type="term" value="C:cytoplasm"/>
    <property type="evidence" value="ECO:0007669"/>
    <property type="project" value="UniProtKB-SubCell"/>
</dbReference>
<dbReference type="GO" id="GO:0070038">
    <property type="term" value="F:rRNA (pseudouridine-N3-)-methyltransferase activity"/>
    <property type="evidence" value="ECO:0007669"/>
    <property type="project" value="UniProtKB-UniRule"/>
</dbReference>
<dbReference type="CDD" id="cd18081">
    <property type="entry name" value="RlmH-like"/>
    <property type="match status" value="1"/>
</dbReference>
<dbReference type="Gene3D" id="3.40.1280.10">
    <property type="match status" value="1"/>
</dbReference>
<dbReference type="HAMAP" id="MF_00658">
    <property type="entry name" value="23SrRNA_methyltr_H"/>
    <property type="match status" value="1"/>
</dbReference>
<dbReference type="InterPro" id="IPR029028">
    <property type="entry name" value="Alpha/beta_knot_MTases"/>
</dbReference>
<dbReference type="InterPro" id="IPR003742">
    <property type="entry name" value="RlmH-like"/>
</dbReference>
<dbReference type="InterPro" id="IPR029026">
    <property type="entry name" value="tRNA_m1G_MTases_N"/>
</dbReference>
<dbReference type="NCBIfam" id="NF000984">
    <property type="entry name" value="PRK00103.1-1"/>
    <property type="match status" value="1"/>
</dbReference>
<dbReference type="NCBIfam" id="NF000986">
    <property type="entry name" value="PRK00103.1-4"/>
    <property type="match status" value="1"/>
</dbReference>
<dbReference type="NCBIfam" id="TIGR00246">
    <property type="entry name" value="tRNA_RlmH_YbeA"/>
    <property type="match status" value="1"/>
</dbReference>
<dbReference type="PANTHER" id="PTHR33603">
    <property type="entry name" value="METHYLTRANSFERASE"/>
    <property type="match status" value="1"/>
</dbReference>
<dbReference type="PANTHER" id="PTHR33603:SF1">
    <property type="entry name" value="RIBOSOMAL RNA LARGE SUBUNIT METHYLTRANSFERASE H"/>
    <property type="match status" value="1"/>
</dbReference>
<dbReference type="Pfam" id="PF02590">
    <property type="entry name" value="SPOUT_MTase"/>
    <property type="match status" value="1"/>
</dbReference>
<dbReference type="PIRSF" id="PIRSF004505">
    <property type="entry name" value="MT_bac"/>
    <property type="match status" value="1"/>
</dbReference>
<dbReference type="SUPFAM" id="SSF75217">
    <property type="entry name" value="alpha/beta knot"/>
    <property type="match status" value="1"/>
</dbReference>
<comment type="function">
    <text evidence="1">Specifically methylates the pseudouridine at position 1915 (m3Psi1915) in 23S rRNA.</text>
</comment>
<comment type="catalytic activity">
    <reaction evidence="1">
        <text>pseudouridine(1915) in 23S rRNA + S-adenosyl-L-methionine = N(3)-methylpseudouridine(1915) in 23S rRNA + S-adenosyl-L-homocysteine + H(+)</text>
        <dbReference type="Rhea" id="RHEA:42752"/>
        <dbReference type="Rhea" id="RHEA-COMP:10221"/>
        <dbReference type="Rhea" id="RHEA-COMP:10222"/>
        <dbReference type="ChEBI" id="CHEBI:15378"/>
        <dbReference type="ChEBI" id="CHEBI:57856"/>
        <dbReference type="ChEBI" id="CHEBI:59789"/>
        <dbReference type="ChEBI" id="CHEBI:65314"/>
        <dbReference type="ChEBI" id="CHEBI:74486"/>
        <dbReference type="EC" id="2.1.1.177"/>
    </reaction>
</comment>
<comment type="subunit">
    <text evidence="1">Homodimer.</text>
</comment>
<comment type="subcellular location">
    <subcellularLocation>
        <location evidence="1">Cytoplasm</location>
    </subcellularLocation>
</comment>
<comment type="similarity">
    <text evidence="1">Belongs to the RNA methyltransferase RlmH family.</text>
</comment>
<comment type="sequence caution" evidence="2">
    <conflict type="erroneous initiation">
        <sequence resource="EMBL-CDS" id="CAG21232"/>
    </conflict>
</comment>
<proteinExistence type="inferred from homology"/>